<reference key="1">
    <citation type="journal article" date="1997" name="DNA Res.">
        <title>Sequence analysis of the groESL-cotA region of the Bacillus subtilis genome, containing the restriction/modification system genes.</title>
        <authorList>
            <person name="Kasahara Y."/>
            <person name="Nakai S."/>
            <person name="Ogasawara N."/>
            <person name="Yata K."/>
            <person name="Sadaie Y."/>
        </authorList>
    </citation>
    <scope>NUCLEOTIDE SEQUENCE [GENOMIC DNA]</scope>
    <source>
        <strain>168 / Marburg / ATCC 6051 / DSM 10 / JCM 1465 / NBRC 13719 / NCIMB 3610 / NRRL NRS-744 / VKM B-501</strain>
    </source>
</reference>
<reference key="2">
    <citation type="journal article" date="1997" name="Nature">
        <title>The complete genome sequence of the Gram-positive bacterium Bacillus subtilis.</title>
        <authorList>
            <person name="Kunst F."/>
            <person name="Ogasawara N."/>
            <person name="Moszer I."/>
            <person name="Albertini A.M."/>
            <person name="Alloni G."/>
            <person name="Azevedo V."/>
            <person name="Bertero M.G."/>
            <person name="Bessieres P."/>
            <person name="Bolotin A."/>
            <person name="Borchert S."/>
            <person name="Borriss R."/>
            <person name="Boursier L."/>
            <person name="Brans A."/>
            <person name="Braun M."/>
            <person name="Brignell S.C."/>
            <person name="Bron S."/>
            <person name="Brouillet S."/>
            <person name="Bruschi C.V."/>
            <person name="Caldwell B."/>
            <person name="Capuano V."/>
            <person name="Carter N.M."/>
            <person name="Choi S.-K."/>
            <person name="Codani J.-J."/>
            <person name="Connerton I.F."/>
            <person name="Cummings N.J."/>
            <person name="Daniel R.A."/>
            <person name="Denizot F."/>
            <person name="Devine K.M."/>
            <person name="Duesterhoeft A."/>
            <person name="Ehrlich S.D."/>
            <person name="Emmerson P.T."/>
            <person name="Entian K.-D."/>
            <person name="Errington J."/>
            <person name="Fabret C."/>
            <person name="Ferrari E."/>
            <person name="Foulger D."/>
            <person name="Fritz C."/>
            <person name="Fujita M."/>
            <person name="Fujita Y."/>
            <person name="Fuma S."/>
            <person name="Galizzi A."/>
            <person name="Galleron N."/>
            <person name="Ghim S.-Y."/>
            <person name="Glaser P."/>
            <person name="Goffeau A."/>
            <person name="Golightly E.J."/>
            <person name="Grandi G."/>
            <person name="Guiseppi G."/>
            <person name="Guy B.J."/>
            <person name="Haga K."/>
            <person name="Haiech J."/>
            <person name="Harwood C.R."/>
            <person name="Henaut A."/>
            <person name="Hilbert H."/>
            <person name="Holsappel S."/>
            <person name="Hosono S."/>
            <person name="Hullo M.-F."/>
            <person name="Itaya M."/>
            <person name="Jones L.-M."/>
            <person name="Joris B."/>
            <person name="Karamata D."/>
            <person name="Kasahara Y."/>
            <person name="Klaerr-Blanchard M."/>
            <person name="Klein C."/>
            <person name="Kobayashi Y."/>
            <person name="Koetter P."/>
            <person name="Koningstein G."/>
            <person name="Krogh S."/>
            <person name="Kumano M."/>
            <person name="Kurita K."/>
            <person name="Lapidus A."/>
            <person name="Lardinois S."/>
            <person name="Lauber J."/>
            <person name="Lazarevic V."/>
            <person name="Lee S.-M."/>
            <person name="Levine A."/>
            <person name="Liu H."/>
            <person name="Masuda S."/>
            <person name="Mauel C."/>
            <person name="Medigue C."/>
            <person name="Medina N."/>
            <person name="Mellado R.P."/>
            <person name="Mizuno M."/>
            <person name="Moestl D."/>
            <person name="Nakai S."/>
            <person name="Noback M."/>
            <person name="Noone D."/>
            <person name="O'Reilly M."/>
            <person name="Ogawa K."/>
            <person name="Ogiwara A."/>
            <person name="Oudega B."/>
            <person name="Park S.-H."/>
            <person name="Parro V."/>
            <person name="Pohl T.M."/>
            <person name="Portetelle D."/>
            <person name="Porwollik S."/>
            <person name="Prescott A.M."/>
            <person name="Presecan E."/>
            <person name="Pujic P."/>
            <person name="Purnelle B."/>
            <person name="Rapoport G."/>
            <person name="Rey M."/>
            <person name="Reynolds S."/>
            <person name="Rieger M."/>
            <person name="Rivolta C."/>
            <person name="Rocha E."/>
            <person name="Roche B."/>
            <person name="Rose M."/>
            <person name="Sadaie Y."/>
            <person name="Sato T."/>
            <person name="Scanlan E."/>
            <person name="Schleich S."/>
            <person name="Schroeter R."/>
            <person name="Scoffone F."/>
            <person name="Sekiguchi J."/>
            <person name="Sekowska A."/>
            <person name="Seror S.J."/>
            <person name="Serror P."/>
            <person name="Shin B.-S."/>
            <person name="Soldo B."/>
            <person name="Sorokin A."/>
            <person name="Tacconi E."/>
            <person name="Takagi T."/>
            <person name="Takahashi H."/>
            <person name="Takemaru K."/>
            <person name="Takeuchi M."/>
            <person name="Tamakoshi A."/>
            <person name="Tanaka T."/>
            <person name="Terpstra P."/>
            <person name="Tognoni A."/>
            <person name="Tosato V."/>
            <person name="Uchiyama S."/>
            <person name="Vandenbol M."/>
            <person name="Vannier F."/>
            <person name="Vassarotti A."/>
            <person name="Viari A."/>
            <person name="Wambutt R."/>
            <person name="Wedler E."/>
            <person name="Wedler H."/>
            <person name="Weitzenegger T."/>
            <person name="Winters P."/>
            <person name="Wipat A."/>
            <person name="Yamamoto H."/>
            <person name="Yamane K."/>
            <person name="Yasumoto K."/>
            <person name="Yata K."/>
            <person name="Yoshida K."/>
            <person name="Yoshikawa H.-F."/>
            <person name="Zumstein E."/>
            <person name="Yoshikawa H."/>
            <person name="Danchin A."/>
        </authorList>
    </citation>
    <scope>NUCLEOTIDE SEQUENCE [LARGE SCALE GENOMIC DNA]</scope>
    <source>
        <strain>168</strain>
    </source>
</reference>
<reference key="3">
    <citation type="journal article" date="1996" name="J. Bacteriol.">
        <title>Cold shock stress-induced proteins in Bacillus subtilis.</title>
        <authorList>
            <person name="Graumann P."/>
            <person name="Schroeder K."/>
            <person name="Schmid R."/>
            <person name="Marahiel M.A."/>
        </authorList>
    </citation>
    <scope>PROTEIN SEQUENCE OF 2-23</scope>
    <scope>INDUCTION BY COLD STRESS</scope>
    <source>
        <strain>168 / JH642</strain>
    </source>
</reference>
<reference key="4">
    <citation type="journal article" date="2001" name="Mol. Microbiol.">
        <title>Alkaline shock induces the Bacillus subtilis sigma(W) regulon.</title>
        <authorList>
            <person name="Wiegert T."/>
            <person name="Homuth G."/>
            <person name="Versteeg S."/>
            <person name="Schumann W."/>
        </authorList>
    </citation>
    <scope>INDUCTION BY ALKALINE PH</scope>
    <source>
        <strain>168</strain>
    </source>
</reference>
<keyword id="KW-0175">Coiled coil</keyword>
<keyword id="KW-0903">Direct protein sequencing</keyword>
<keyword id="KW-1185">Reference proteome</keyword>
<keyword id="KW-0346">Stress response</keyword>
<protein>
    <recommendedName>
        <fullName>Phage shock protein A homolog</fullName>
    </recommendedName>
</protein>
<proteinExistence type="evidence at protein level"/>
<comment type="induction">
    <text evidence="3 4">By cold shock (at protein level) (PubMed:8755892). Expression is sigma W-dependent; induced by alkali stress and by infection with phage SPP1 (PubMed:11454200).</text>
</comment>
<comment type="similarity">
    <text evidence="5">Belongs to the PspA/Vipp/IM30 family.</text>
</comment>
<dbReference type="EMBL" id="AB007638">
    <property type="protein sequence ID" value="BAA22761.1"/>
    <property type="molecule type" value="Genomic_DNA"/>
</dbReference>
<dbReference type="EMBL" id="AL009126">
    <property type="protein sequence ID" value="CAB12437.1"/>
    <property type="molecule type" value="Genomic_DNA"/>
</dbReference>
<dbReference type="PIR" id="B69789">
    <property type="entry name" value="B69789"/>
</dbReference>
<dbReference type="RefSeq" id="WP_003243015.1">
    <property type="nucleotide sequence ID" value="NZ_OZ025638.1"/>
</dbReference>
<dbReference type="SMR" id="P54617"/>
<dbReference type="FunCoup" id="P54617">
    <property type="interactions" value="331"/>
</dbReference>
<dbReference type="IntAct" id="P54617">
    <property type="interactions" value="2"/>
</dbReference>
<dbReference type="MINT" id="P54617"/>
<dbReference type="STRING" id="224308.BSU06180"/>
<dbReference type="PaxDb" id="224308-BSU06180"/>
<dbReference type="EnsemblBacteria" id="CAB12437">
    <property type="protein sequence ID" value="CAB12437"/>
    <property type="gene ID" value="BSU_06180"/>
</dbReference>
<dbReference type="GeneID" id="936013"/>
<dbReference type="KEGG" id="bsu:BSU06180"/>
<dbReference type="PATRIC" id="fig|224308.179.peg.669"/>
<dbReference type="eggNOG" id="COG1842">
    <property type="taxonomic scope" value="Bacteria"/>
</dbReference>
<dbReference type="InParanoid" id="P54617"/>
<dbReference type="OrthoDB" id="9779630at2"/>
<dbReference type="PhylomeDB" id="P54617"/>
<dbReference type="BioCyc" id="BSUB:BSU06180-MONOMER"/>
<dbReference type="Proteomes" id="UP000001570">
    <property type="component" value="Chromosome"/>
</dbReference>
<dbReference type="InterPro" id="IPR007157">
    <property type="entry name" value="PspA_VIPP1"/>
</dbReference>
<dbReference type="PANTHER" id="PTHR31088">
    <property type="entry name" value="MEMBRANE-ASSOCIATED PROTEIN VIPP1, CHLOROPLASTIC"/>
    <property type="match status" value="1"/>
</dbReference>
<dbReference type="PANTHER" id="PTHR31088:SF6">
    <property type="entry name" value="PHAGE SHOCK PROTEIN A"/>
    <property type="match status" value="1"/>
</dbReference>
<dbReference type="Pfam" id="PF04012">
    <property type="entry name" value="PspA_IM30"/>
    <property type="match status" value="1"/>
</dbReference>
<evidence type="ECO:0000255" key="1"/>
<evidence type="ECO:0000256" key="2">
    <source>
        <dbReference type="SAM" id="MobiDB-lite"/>
    </source>
</evidence>
<evidence type="ECO:0000269" key="3">
    <source>
    </source>
</evidence>
<evidence type="ECO:0000269" key="4">
    <source>
    </source>
</evidence>
<evidence type="ECO:0000305" key="5"/>
<gene>
    <name type="primary">ydjF</name>
    <name type="ordered locus">BSU06180</name>
</gene>
<accession>P54617</accession>
<accession>O34865</accession>
<feature type="initiator methionine" description="Removed" evidence="4">
    <location>
        <position position="1"/>
    </location>
</feature>
<feature type="chain" id="PRO_0000097070" description="Phage shock protein A homolog">
    <location>
        <begin position="2"/>
        <end position="227"/>
    </location>
</feature>
<feature type="region of interest" description="Disordered" evidence="2">
    <location>
        <begin position="191"/>
        <end position="211"/>
    </location>
</feature>
<feature type="coiled-coil region" evidence="1">
    <location>
        <begin position="33"/>
        <end position="125"/>
    </location>
</feature>
<feature type="sequence conflict" description="In Ref. 3; AA sequence." evidence="5" ref="3">
    <original>D</original>
    <variation>E</variation>
    <location>
        <position position="20"/>
    </location>
</feature>
<name>PSPA_BACSU</name>
<sequence>MSIIGRFKDIMSANINALLDKAENPEKMVDQYLRNMNSDLAKVKAETAAVMAEEQRAKREYHECQADMEKMESYAMKALQAGNESDARKFLERKTSLESKLSELQAANQIAATNAAQMRKMHDKLVSDIGELEARKNMIKAKWAVAKTQERMNKLGASVSSTSQSMSAFGRMEDKVNKALDQANAMAELNSAPQDDMADLSAKYDTGGSSQVDDELAALKAKMMLDK</sequence>
<organism>
    <name type="scientific">Bacillus subtilis (strain 168)</name>
    <dbReference type="NCBI Taxonomy" id="224308"/>
    <lineage>
        <taxon>Bacteria</taxon>
        <taxon>Bacillati</taxon>
        <taxon>Bacillota</taxon>
        <taxon>Bacilli</taxon>
        <taxon>Bacillales</taxon>
        <taxon>Bacillaceae</taxon>
        <taxon>Bacillus</taxon>
    </lineage>
</organism>